<dbReference type="EC" id="5.6.2.1" evidence="1"/>
<dbReference type="EMBL" id="AE000657">
    <property type="protein sequence ID" value="AAC06848.1"/>
    <property type="molecule type" value="Genomic_DNA"/>
</dbReference>
<dbReference type="PIR" id="A70358">
    <property type="entry name" value="A70358"/>
</dbReference>
<dbReference type="RefSeq" id="NP_213453.1">
    <property type="nucleotide sequence ID" value="NC_000918.1"/>
</dbReference>
<dbReference type="RefSeq" id="WP_010880391.1">
    <property type="nucleotide sequence ID" value="NC_000918.1"/>
</dbReference>
<dbReference type="SMR" id="O66893"/>
<dbReference type="FunCoup" id="O66893">
    <property type="interactions" value="416"/>
</dbReference>
<dbReference type="STRING" id="224324.aq_657"/>
<dbReference type="EnsemblBacteria" id="AAC06848">
    <property type="protein sequence ID" value="AAC06848"/>
    <property type="gene ID" value="aq_657"/>
</dbReference>
<dbReference type="KEGG" id="aae:aq_657"/>
<dbReference type="PATRIC" id="fig|224324.8.peg.534"/>
<dbReference type="eggNOG" id="COG0550">
    <property type="taxonomic scope" value="Bacteria"/>
</dbReference>
<dbReference type="HOGENOM" id="CLU_002929_4_3_0"/>
<dbReference type="InParanoid" id="O66893"/>
<dbReference type="OrthoDB" id="9804262at2"/>
<dbReference type="Proteomes" id="UP000000798">
    <property type="component" value="Chromosome"/>
</dbReference>
<dbReference type="GO" id="GO:0003677">
    <property type="term" value="F:DNA binding"/>
    <property type="evidence" value="ECO:0007669"/>
    <property type="project" value="UniProtKB-KW"/>
</dbReference>
<dbReference type="GO" id="GO:0003917">
    <property type="term" value="F:DNA topoisomerase type I (single strand cut, ATP-independent) activity"/>
    <property type="evidence" value="ECO:0007669"/>
    <property type="project" value="UniProtKB-UniRule"/>
</dbReference>
<dbReference type="GO" id="GO:0046872">
    <property type="term" value="F:metal ion binding"/>
    <property type="evidence" value="ECO:0007669"/>
    <property type="project" value="UniProtKB-KW"/>
</dbReference>
<dbReference type="GO" id="GO:0006265">
    <property type="term" value="P:DNA topological change"/>
    <property type="evidence" value="ECO:0007669"/>
    <property type="project" value="UniProtKB-UniRule"/>
</dbReference>
<dbReference type="CDD" id="cd00186">
    <property type="entry name" value="TOP1Ac"/>
    <property type="match status" value="1"/>
</dbReference>
<dbReference type="CDD" id="cd03363">
    <property type="entry name" value="TOPRIM_TopoIA_TopoI"/>
    <property type="match status" value="1"/>
</dbReference>
<dbReference type="Gene3D" id="3.40.50.140">
    <property type="match status" value="1"/>
</dbReference>
<dbReference type="Gene3D" id="1.10.460.10">
    <property type="entry name" value="Topoisomerase I, domain 2"/>
    <property type="match status" value="1"/>
</dbReference>
<dbReference type="Gene3D" id="2.70.20.10">
    <property type="entry name" value="Topoisomerase I, domain 3"/>
    <property type="match status" value="1"/>
</dbReference>
<dbReference type="Gene3D" id="1.10.290.10">
    <property type="entry name" value="Topoisomerase I, domain 4"/>
    <property type="match status" value="1"/>
</dbReference>
<dbReference type="HAMAP" id="MF_00952">
    <property type="entry name" value="Topoisom_1_prok"/>
    <property type="match status" value="1"/>
</dbReference>
<dbReference type="InterPro" id="IPR000380">
    <property type="entry name" value="Topo_IA"/>
</dbReference>
<dbReference type="InterPro" id="IPR003601">
    <property type="entry name" value="Topo_IA_2"/>
</dbReference>
<dbReference type="InterPro" id="IPR023406">
    <property type="entry name" value="Topo_IA_AS"/>
</dbReference>
<dbReference type="InterPro" id="IPR013497">
    <property type="entry name" value="Topo_IA_cen"/>
</dbReference>
<dbReference type="InterPro" id="IPR013824">
    <property type="entry name" value="Topo_IA_cen_sub1"/>
</dbReference>
<dbReference type="InterPro" id="IPR013825">
    <property type="entry name" value="Topo_IA_cen_sub2"/>
</dbReference>
<dbReference type="InterPro" id="IPR013826">
    <property type="entry name" value="Topo_IA_cen_sub3"/>
</dbReference>
<dbReference type="InterPro" id="IPR023405">
    <property type="entry name" value="Topo_IA_core_domain"/>
</dbReference>
<dbReference type="InterPro" id="IPR003602">
    <property type="entry name" value="Topo_IA_DNA-bd_dom"/>
</dbReference>
<dbReference type="InterPro" id="IPR005733">
    <property type="entry name" value="TopoI_bac-type"/>
</dbReference>
<dbReference type="InterPro" id="IPR028612">
    <property type="entry name" value="Topoisom_1_IA"/>
</dbReference>
<dbReference type="InterPro" id="IPR006171">
    <property type="entry name" value="TOPRIM_dom"/>
</dbReference>
<dbReference type="InterPro" id="IPR034149">
    <property type="entry name" value="TOPRIM_TopoI"/>
</dbReference>
<dbReference type="NCBIfam" id="TIGR01051">
    <property type="entry name" value="topA_bact"/>
    <property type="match status" value="1"/>
</dbReference>
<dbReference type="PANTHER" id="PTHR42785:SF1">
    <property type="entry name" value="DNA TOPOISOMERASE"/>
    <property type="match status" value="1"/>
</dbReference>
<dbReference type="PANTHER" id="PTHR42785">
    <property type="entry name" value="DNA TOPOISOMERASE, TYPE IA, CORE"/>
    <property type="match status" value="1"/>
</dbReference>
<dbReference type="Pfam" id="PF01131">
    <property type="entry name" value="Topoisom_bac"/>
    <property type="match status" value="1"/>
</dbReference>
<dbReference type="Pfam" id="PF01751">
    <property type="entry name" value="Toprim"/>
    <property type="match status" value="1"/>
</dbReference>
<dbReference type="PRINTS" id="PR00417">
    <property type="entry name" value="PRTPISMRASEI"/>
</dbReference>
<dbReference type="SMART" id="SM00437">
    <property type="entry name" value="TOP1Ac"/>
    <property type="match status" value="1"/>
</dbReference>
<dbReference type="SMART" id="SM00436">
    <property type="entry name" value="TOP1Bc"/>
    <property type="match status" value="1"/>
</dbReference>
<dbReference type="SMART" id="SM00493">
    <property type="entry name" value="TOPRIM"/>
    <property type="match status" value="1"/>
</dbReference>
<dbReference type="SUPFAM" id="SSF56712">
    <property type="entry name" value="Prokaryotic type I DNA topoisomerase"/>
    <property type="match status" value="1"/>
</dbReference>
<dbReference type="PROSITE" id="PS00396">
    <property type="entry name" value="TOPO_IA_1"/>
    <property type="match status" value="1"/>
</dbReference>
<dbReference type="PROSITE" id="PS52039">
    <property type="entry name" value="TOPO_IA_2"/>
    <property type="match status" value="1"/>
</dbReference>
<dbReference type="PROSITE" id="PS50880">
    <property type="entry name" value="TOPRIM"/>
    <property type="match status" value="1"/>
</dbReference>
<keyword id="KW-0238">DNA-binding</keyword>
<keyword id="KW-0413">Isomerase</keyword>
<keyword id="KW-0460">Magnesium</keyword>
<keyword id="KW-0479">Metal-binding</keyword>
<keyword id="KW-1185">Reference proteome</keyword>
<keyword id="KW-0799">Topoisomerase</keyword>
<organism>
    <name type="scientific">Aquifex aeolicus (strain VF5)</name>
    <dbReference type="NCBI Taxonomy" id="224324"/>
    <lineage>
        <taxon>Bacteria</taxon>
        <taxon>Pseudomonadati</taxon>
        <taxon>Aquificota</taxon>
        <taxon>Aquificia</taxon>
        <taxon>Aquificales</taxon>
        <taxon>Aquificaceae</taxon>
        <taxon>Aquifex</taxon>
    </lineage>
</organism>
<accession>O66893</accession>
<feature type="chain" id="PRO_0000145138" description="DNA topoisomerase 1">
    <location>
        <begin position="1"/>
        <end position="540"/>
    </location>
</feature>
<feature type="domain" description="Toprim" evidence="1">
    <location>
        <begin position="1"/>
        <end position="110"/>
    </location>
</feature>
<feature type="domain" description="Topo IA-type catalytic" evidence="2">
    <location>
        <begin position="126"/>
        <end position="536"/>
    </location>
</feature>
<feature type="region of interest" description="Interaction with DNA" evidence="1">
    <location>
        <begin position="161"/>
        <end position="166"/>
    </location>
</feature>
<feature type="active site" description="O-(5'-phospho-DNA)-tyrosine intermediate" evidence="2">
    <location>
        <position position="281"/>
    </location>
</feature>
<feature type="binding site" evidence="1">
    <location>
        <position position="7"/>
    </location>
    <ligand>
        <name>Mg(2+)</name>
        <dbReference type="ChEBI" id="CHEBI:18420"/>
        <note>catalytic</note>
    </ligand>
</feature>
<feature type="binding site" evidence="1">
    <location>
        <position position="79"/>
    </location>
    <ligand>
        <name>Mg(2+)</name>
        <dbReference type="ChEBI" id="CHEBI:18420"/>
        <note>catalytic</note>
    </ligand>
</feature>
<feature type="site" description="Interaction with DNA" evidence="1">
    <location>
        <position position="31"/>
    </location>
</feature>
<feature type="site" description="Interaction with DNA" evidence="1">
    <location>
        <position position="136"/>
    </location>
</feature>
<feature type="site" description="Interaction with DNA" evidence="1">
    <location>
        <position position="137"/>
    </location>
</feature>
<feature type="site" description="Interaction with DNA" evidence="1">
    <location>
        <position position="140"/>
    </location>
</feature>
<feature type="site" description="Interaction with DNA" evidence="1">
    <location>
        <position position="145"/>
    </location>
</feature>
<feature type="site" description="Interaction with DNA" evidence="1">
    <location>
        <position position="152"/>
    </location>
</feature>
<feature type="site" description="Interaction with DNA" evidence="1">
    <location>
        <position position="283"/>
    </location>
</feature>
<feature type="site" description="Interaction with DNA" evidence="1">
    <location>
        <position position="467"/>
    </location>
</feature>
<protein>
    <recommendedName>
        <fullName evidence="1">DNA topoisomerase 1</fullName>
        <ecNumber evidence="1">5.6.2.1</ecNumber>
    </recommendedName>
    <alternativeName>
        <fullName evidence="1">DNA topoisomerase I</fullName>
    </alternativeName>
    <alternativeName>
        <fullName>Omega-protein</fullName>
    </alternativeName>
    <alternativeName>
        <fullName>Relaxing enzyme</fullName>
    </alternativeName>
    <alternativeName>
        <fullName>Swivelase</fullName>
    </alternativeName>
    <alternativeName>
        <fullName>Untwisting enzyme</fullName>
    </alternativeName>
</protein>
<reference key="1">
    <citation type="journal article" date="1998" name="Nature">
        <title>The complete genome of the hyperthermophilic bacterium Aquifex aeolicus.</title>
        <authorList>
            <person name="Deckert G."/>
            <person name="Warren P.V."/>
            <person name="Gaasterland T."/>
            <person name="Young W.G."/>
            <person name="Lenox A.L."/>
            <person name="Graham D.E."/>
            <person name="Overbeek R."/>
            <person name="Snead M.A."/>
            <person name="Keller M."/>
            <person name="Aujay M."/>
            <person name="Huber R."/>
            <person name="Feldman R.A."/>
            <person name="Short J.M."/>
            <person name="Olsen G.J."/>
            <person name="Swanson R.V."/>
        </authorList>
    </citation>
    <scope>NUCLEOTIDE SEQUENCE [LARGE SCALE GENOMIC DNA]</scope>
    <source>
        <strain>VF5</strain>
    </source>
</reference>
<sequence>MELFIVESPTKAKTIQKFLGKGFLVKATLGHVKDLPEKELGVDLRTLKAKYVYKRGKKKLVEQLKKLSRRSSIVYLGTDPDREGEAIAYFLKKDLEKVNKNIKRAVFYEITPEAIRESIRNAGDVNMNLVYAQFARRILDRLIGYLISPILWKEFKNYKLSAGRVQSPALRLIVEREREIQNFKVKKYYYVKALLRKGSEEFWAIYDYRYENPSDAKIIAKKLEKGYFSVYKVEKKKEKVSPPKPFITSDLQSEANAKFGFSSERTQKLAQELYEKGYITYPRTDSYRMNEKKAKEFMNYIEKKYGKEYVGRLRRFREKATAQGAHECIRPTSLREEIPEREELRLLYDLIFRRTIASLMKEMLLEREKVTVEAITPELKHPVYLVAKGLKIVFDGWSRVYPSEITEEKLPELYEGDLLDLVKTTLEERKTQPPPRYTEGTLIKTLEKLGIGRPSTYATIVKTLKERGYVEVKKKALVPTEIAFQVVEFLMERFPTLMDYKFTAQMEEKLDLVEEGKLNWKSVVYEFMEKIFGKELEMVR</sequence>
<proteinExistence type="inferred from homology"/>
<gene>
    <name evidence="1" type="primary">topA</name>
    <name type="ordered locus">aq_657</name>
</gene>
<evidence type="ECO:0000255" key="1">
    <source>
        <dbReference type="HAMAP-Rule" id="MF_00952"/>
    </source>
</evidence>
<evidence type="ECO:0000255" key="2">
    <source>
        <dbReference type="PROSITE-ProRule" id="PRU01383"/>
    </source>
</evidence>
<name>TOP1_AQUAE</name>
<comment type="function">
    <text evidence="1">Releases the supercoiling and torsional tension of DNA, which is introduced during the DNA replication and transcription, by transiently cleaving and rejoining one strand of the DNA duplex. Introduces a single-strand break via transesterification at a target site in duplex DNA. The scissile phosphodiester is attacked by the catalytic tyrosine of the enzyme, resulting in the formation of a DNA-(5'-phosphotyrosyl)-enzyme intermediate and the expulsion of a 3'-OH DNA strand. The free DNA strand then undergoes passage around the unbroken strand, thus removing DNA supercoils. Finally, in the religation step, the DNA 3'-OH attacks the covalent intermediate to expel the active-site tyrosine and restore the DNA phosphodiester backbone.</text>
</comment>
<comment type="catalytic activity">
    <reaction evidence="1">
        <text>ATP-independent breakage of single-stranded DNA, followed by passage and rejoining.</text>
        <dbReference type="EC" id="5.6.2.1"/>
    </reaction>
</comment>
<comment type="cofactor">
    <cofactor evidence="1">
        <name>Mg(2+)</name>
        <dbReference type="ChEBI" id="CHEBI:18420"/>
    </cofactor>
</comment>
<comment type="subunit">
    <text evidence="1">Monomer.</text>
</comment>
<comment type="similarity">
    <text evidence="1">Belongs to the type IA topoisomerase family.</text>
</comment>